<feature type="chain" id="PRO_0000081677" description="Nucleolar protein 4">
    <location>
        <begin position="1"/>
        <end position="685"/>
    </location>
</feature>
<feature type="domain" description="RRM 1" evidence="1">
    <location>
        <begin position="26"/>
        <end position="103"/>
    </location>
</feature>
<feature type="domain" description="RRM 2" evidence="1">
    <location>
        <begin position="147"/>
        <end position="225"/>
    </location>
</feature>
<feature type="domain" description="RRM 3" evidence="1">
    <location>
        <begin position="290"/>
        <end position="383"/>
    </location>
</feature>
<feature type="domain" description="RRM 4" evidence="1">
    <location>
        <begin position="462"/>
        <end position="612"/>
    </location>
</feature>
<feature type="region of interest" description="Disordered" evidence="2">
    <location>
        <begin position="1"/>
        <end position="21"/>
    </location>
</feature>
<feature type="region of interest" description="Disordered" evidence="2">
    <location>
        <begin position="106"/>
        <end position="142"/>
    </location>
</feature>
<feature type="region of interest" description="Disordered" evidence="2">
    <location>
        <begin position="231"/>
        <end position="285"/>
    </location>
</feature>
<feature type="region of interest" description="Disordered" evidence="2">
    <location>
        <begin position="622"/>
        <end position="685"/>
    </location>
</feature>
<feature type="compositionally biased region" description="Basic and acidic residues" evidence="2">
    <location>
        <begin position="106"/>
        <end position="123"/>
    </location>
</feature>
<feature type="compositionally biased region" description="Acidic residues" evidence="2">
    <location>
        <begin position="130"/>
        <end position="140"/>
    </location>
</feature>
<feature type="compositionally biased region" description="Basic and acidic residues" evidence="2">
    <location>
        <begin position="231"/>
        <end position="242"/>
    </location>
</feature>
<feature type="compositionally biased region" description="Acidic residues" evidence="2">
    <location>
        <begin position="243"/>
        <end position="268"/>
    </location>
</feature>
<feature type="compositionally biased region" description="Basic residues" evidence="2">
    <location>
        <begin position="622"/>
        <end position="631"/>
    </location>
</feature>
<feature type="compositionally biased region" description="Basic and acidic residues" evidence="2">
    <location>
        <begin position="645"/>
        <end position="672"/>
    </location>
</feature>
<feature type="compositionally biased region" description="Basic residues" evidence="2">
    <location>
        <begin position="674"/>
        <end position="685"/>
    </location>
</feature>
<feature type="modified residue" description="Phosphoserine" evidence="5 6">
    <location>
        <position position="247"/>
    </location>
</feature>
<feature type="modified residue" description="Phosphothreonine" evidence="4">
    <location>
        <position position="379"/>
    </location>
</feature>
<feature type="sequence variant">
    <original>P</original>
    <variation>A</variation>
    <location>
        <position position="308"/>
    </location>
</feature>
<dbReference type="EMBL" id="U02598">
    <property type="protein sequence ID" value="AAA20590.1"/>
    <property type="molecule type" value="Genomic_DNA"/>
</dbReference>
<dbReference type="EMBL" id="X76245">
    <property type="protein sequence ID" value="CAA53824.1"/>
    <property type="molecule type" value="Genomic_DNA"/>
</dbReference>
<dbReference type="EMBL" id="U44030">
    <property type="protein sequence ID" value="AAB68177.1"/>
    <property type="molecule type" value="Genomic_DNA"/>
</dbReference>
<dbReference type="EMBL" id="BK006949">
    <property type="protein sequence ID" value="DAA11386.1"/>
    <property type="molecule type" value="Genomic_DNA"/>
</dbReference>
<dbReference type="PIR" id="S46365">
    <property type="entry name" value="S46365"/>
</dbReference>
<dbReference type="RefSeq" id="NP_015282.1">
    <property type="nucleotide sequence ID" value="NM_001183857.1"/>
</dbReference>
<dbReference type="SMR" id="P37838"/>
<dbReference type="BioGRID" id="36136">
    <property type="interactions" value="235"/>
</dbReference>
<dbReference type="DIP" id="DIP-3891N"/>
<dbReference type="FunCoup" id="P37838">
    <property type="interactions" value="1475"/>
</dbReference>
<dbReference type="IntAct" id="P37838">
    <property type="interactions" value="95"/>
</dbReference>
<dbReference type="MINT" id="P37838"/>
<dbReference type="STRING" id="4932.YPL043W"/>
<dbReference type="iPTMnet" id="P37838"/>
<dbReference type="PaxDb" id="4932-YPL043W"/>
<dbReference type="PeptideAtlas" id="P37838"/>
<dbReference type="EnsemblFungi" id="YPL043W_mRNA">
    <property type="protein sequence ID" value="YPL043W"/>
    <property type="gene ID" value="YPL043W"/>
</dbReference>
<dbReference type="GeneID" id="856063"/>
<dbReference type="KEGG" id="sce:YPL043W"/>
<dbReference type="AGR" id="SGD:S000005964"/>
<dbReference type="SGD" id="S000005964">
    <property type="gene designation" value="NOP4"/>
</dbReference>
<dbReference type="VEuPathDB" id="FungiDB:YPL043W"/>
<dbReference type="eggNOG" id="KOG0127">
    <property type="taxonomic scope" value="Eukaryota"/>
</dbReference>
<dbReference type="GeneTree" id="ENSGT00940000175222"/>
<dbReference type="HOGENOM" id="CLU_011608_3_0_1"/>
<dbReference type="InParanoid" id="P37838"/>
<dbReference type="OMA" id="FTHRHAL"/>
<dbReference type="OrthoDB" id="267048at2759"/>
<dbReference type="BioCyc" id="YEAST:G3O-33957-MONOMER"/>
<dbReference type="BioGRID-ORCS" id="856063">
    <property type="hits" value="1 hit in 10 CRISPR screens"/>
</dbReference>
<dbReference type="CD-CODE" id="BDAE0F88">
    <property type="entry name" value="Nucleolus"/>
</dbReference>
<dbReference type="PRO" id="PR:P37838"/>
<dbReference type="Proteomes" id="UP000002311">
    <property type="component" value="Chromosome XVI"/>
</dbReference>
<dbReference type="RNAct" id="P37838">
    <property type="molecule type" value="protein"/>
</dbReference>
<dbReference type="GO" id="GO:0005730">
    <property type="term" value="C:nucleolus"/>
    <property type="evidence" value="ECO:0007005"/>
    <property type="project" value="SGD"/>
</dbReference>
<dbReference type="GO" id="GO:0005634">
    <property type="term" value="C:nucleus"/>
    <property type="evidence" value="ECO:0007005"/>
    <property type="project" value="SGD"/>
</dbReference>
<dbReference type="GO" id="GO:0042802">
    <property type="term" value="F:identical protein binding"/>
    <property type="evidence" value="ECO:0000353"/>
    <property type="project" value="IntAct"/>
</dbReference>
<dbReference type="GO" id="GO:0070180">
    <property type="term" value="F:large ribosomal subunit rRNA binding"/>
    <property type="evidence" value="ECO:0000314"/>
    <property type="project" value="GO_Central"/>
</dbReference>
<dbReference type="GO" id="GO:0003729">
    <property type="term" value="F:mRNA binding"/>
    <property type="evidence" value="ECO:0007005"/>
    <property type="project" value="SGD"/>
</dbReference>
<dbReference type="GO" id="GO:0000463">
    <property type="term" value="P:maturation of LSU-rRNA from tricistronic rRNA transcript (SSU-rRNA, 5.8S rRNA, LSU-rRNA)"/>
    <property type="evidence" value="ECO:0000315"/>
    <property type="project" value="SGD"/>
</dbReference>
<dbReference type="GO" id="GO:0042273">
    <property type="term" value="P:ribosomal large subunit biogenesis"/>
    <property type="evidence" value="ECO:0000315"/>
    <property type="project" value="SGD"/>
</dbReference>
<dbReference type="CDD" id="cd12674">
    <property type="entry name" value="RRM1_Nop4p"/>
    <property type="match status" value="1"/>
</dbReference>
<dbReference type="CDD" id="cd12675">
    <property type="entry name" value="RRM2_Nop4p"/>
    <property type="match status" value="1"/>
</dbReference>
<dbReference type="CDD" id="cd12676">
    <property type="entry name" value="RRM3_Nop4p"/>
    <property type="match status" value="1"/>
</dbReference>
<dbReference type="CDD" id="cd12677">
    <property type="entry name" value="RRM4_Nop4p"/>
    <property type="match status" value="1"/>
</dbReference>
<dbReference type="FunFam" id="3.30.70.330:FF:000680">
    <property type="entry name" value="NOP4p Nucleolar protein"/>
    <property type="match status" value="1"/>
</dbReference>
<dbReference type="FunFam" id="3.30.70.330:FF:000937">
    <property type="entry name" value="NOP4p Nucleolar protein"/>
    <property type="match status" value="1"/>
</dbReference>
<dbReference type="FunFam" id="3.30.70.330:FF:000704">
    <property type="entry name" value="Ribosome biogenesis (Nop4)"/>
    <property type="match status" value="1"/>
</dbReference>
<dbReference type="Gene3D" id="3.30.70.330">
    <property type="match status" value="4"/>
</dbReference>
<dbReference type="InterPro" id="IPR034805">
    <property type="entry name" value="Nop4_RRM1"/>
</dbReference>
<dbReference type="InterPro" id="IPR034806">
    <property type="entry name" value="Nop4_RRM2"/>
</dbReference>
<dbReference type="InterPro" id="IPR034809">
    <property type="entry name" value="Nop4_RRM4"/>
</dbReference>
<dbReference type="InterPro" id="IPR034808">
    <property type="entry name" value="Nop4p_RRM3"/>
</dbReference>
<dbReference type="InterPro" id="IPR012677">
    <property type="entry name" value="Nucleotide-bd_a/b_plait_sf"/>
</dbReference>
<dbReference type="InterPro" id="IPR035979">
    <property type="entry name" value="RBD_domain_sf"/>
</dbReference>
<dbReference type="InterPro" id="IPR000504">
    <property type="entry name" value="RRM_dom"/>
</dbReference>
<dbReference type="InterPro" id="IPR051945">
    <property type="entry name" value="RRM_MRD1_RNA_proc_ribogen"/>
</dbReference>
<dbReference type="PANTHER" id="PTHR48039">
    <property type="entry name" value="RNA-BINDING MOTIF PROTEIN 14B"/>
    <property type="match status" value="1"/>
</dbReference>
<dbReference type="PANTHER" id="PTHR48039:SF5">
    <property type="entry name" value="RNA-BINDING PROTEIN 28"/>
    <property type="match status" value="1"/>
</dbReference>
<dbReference type="Pfam" id="PF00076">
    <property type="entry name" value="RRM_1"/>
    <property type="match status" value="3"/>
</dbReference>
<dbReference type="SMART" id="SM00360">
    <property type="entry name" value="RRM"/>
    <property type="match status" value="4"/>
</dbReference>
<dbReference type="SUPFAM" id="SSF54928">
    <property type="entry name" value="RNA-binding domain, RBD"/>
    <property type="match status" value="3"/>
</dbReference>
<dbReference type="PROSITE" id="PS50102">
    <property type="entry name" value="RRM"/>
    <property type="match status" value="4"/>
</dbReference>
<keyword id="KW-0539">Nucleus</keyword>
<keyword id="KW-0597">Phosphoprotein</keyword>
<keyword id="KW-1185">Reference proteome</keyword>
<keyword id="KW-0677">Repeat</keyword>
<keyword id="KW-0690">Ribosome biogenesis</keyword>
<keyword id="KW-0694">RNA-binding</keyword>
<keyword id="KW-0698">rRNA processing</keyword>
<sequence length="685" mass="77825">MEETIENVEVPSSNVSKQNDDGLDMKTLFVRSIPQDVTDEQLADFFSNFAPIKHAVVVKDTNKRSRGFGFVSFAVEDDTKEALAKARKTKFNGHILRVDIAKRRDRSKKTSEVVEKSTPESSEKITGQNNEDEDDADGEDSMLKGKPKLIIRNMPWSCRDPVKLKKIFGRYGTVVEATIPRKRDGKLCGFAFVTMKKISNCRIALENTKDLKIDGRKVAVDFAVQKNRWEDYKKAQPEMNDKDDNESGNEDAEENHDDEEDENEEEDRQVDQASKNKESKRKAQNKREDFSVFVRNVPYDATEESLAPHFSKFGSVKYALPVIDKSTGLAKGTAFVAFKDQYTYNECIKNAPAAGSTSLLIGDDVMPEYVYEGRVLSITPTLVREDAGRMAEKNAAKRKEALGKAPGEKDRRNLYLLNEGRVVEGSKMADLLTNTDMEIREKSYKLRVEQLKKNPSLHLSMTRLAIRNLPRAMNDKALKALARKAVVEFATEVKNKERHPLSKEEIIRSTKEKYKFMGPDEIEAQKKKDKKSGVVKQAKVIMEVKGSTAGRSRGYGFVEFRDHKNALMGLRWLNCHAVTSDEILEGLNDDEKKQVDNDLGKGRRLCVEFAIENSNVVKRRREQLKQARTKRTRPDNEDTGDVGESENKKPKKEEATTPTNPDDKKMGDDIKRIIGFKRKRKHAKK</sequence>
<protein>
    <recommendedName>
        <fullName>Nucleolar protein 4</fullName>
    </recommendedName>
    <alternativeName>
        <fullName>Nucleolar protein NOP77</fullName>
    </alternativeName>
</protein>
<accession>P37838</accession>
<accession>D6W3X0</accession>
<organism>
    <name type="scientific">Saccharomyces cerevisiae (strain ATCC 204508 / S288c)</name>
    <name type="common">Baker's yeast</name>
    <dbReference type="NCBI Taxonomy" id="559292"/>
    <lineage>
        <taxon>Eukaryota</taxon>
        <taxon>Fungi</taxon>
        <taxon>Dikarya</taxon>
        <taxon>Ascomycota</taxon>
        <taxon>Saccharomycotina</taxon>
        <taxon>Saccharomycetes</taxon>
        <taxon>Saccharomycetales</taxon>
        <taxon>Saccharomycetaceae</taxon>
        <taxon>Saccharomyces</taxon>
    </lineage>
</organism>
<gene>
    <name type="primary">NOP4</name>
    <name type="synonym">NOP77</name>
    <name type="ordered locus">YPL043W</name>
</gene>
<comment type="function">
    <text>Required for 60S ribosomal subunit synthesis. Probably involved in the processing of 27S rRNA to produce mature 25S rRNA.</text>
</comment>
<comment type="subunit">
    <text>Interacts with NOP1.</text>
</comment>
<comment type="interaction">
    <interactant intactId="EBI-12122">
        <id>P37838</id>
    </interactant>
    <interactant intactId="EBI-24538">
        <id>P38779</id>
        <label>CIC1</label>
    </interactant>
    <organismsDiffer>false</organismsDiffer>
    <experiments>6</experiments>
</comment>
<comment type="interaction">
    <interactant intactId="EBI-12122">
        <id>P37838</id>
    </interactant>
    <interactant intactId="EBI-5644">
        <id>Q12389</id>
        <label>DBP10</label>
    </interactant>
    <organismsDiffer>false</organismsDiffer>
    <experiments>4</experiments>
</comment>
<comment type="interaction">
    <interactant intactId="EBI-12122">
        <id>P37838</id>
    </interactant>
    <interactant intactId="EBI-6170">
        <id>P32892</id>
        <label>DRS1</label>
    </interactant>
    <organismsDiffer>false</organismsDiffer>
    <experiments>5</experiments>
</comment>
<comment type="interaction">
    <interactant intactId="EBI-12122">
        <id>P37838</id>
    </interactant>
    <interactant intactId="EBI-6289">
        <id>P36049</id>
        <label>EBP2</label>
    </interactant>
    <organismsDiffer>false</organismsDiffer>
    <experiments>6</experiments>
</comment>
<comment type="interaction">
    <interactant intactId="EBI-12122">
        <id>P37838</id>
    </interactant>
    <interactant intactId="EBI-8170">
        <id>Q03532</id>
        <label>HAS1</label>
    </interactant>
    <organismsDiffer>false</organismsDiffer>
    <experiments>5</experiments>
</comment>
<comment type="interaction">
    <interactant intactId="EBI-12122">
        <id>P37838</id>
    </interactant>
    <interactant intactId="EBI-22906">
        <id>P43586</id>
        <label>LOC1</label>
    </interactant>
    <organismsDiffer>false</organismsDiffer>
    <experiments>5</experiments>
</comment>
<comment type="interaction">
    <interactant intactId="EBI-12122">
        <id>P37838</id>
    </interactant>
    <interactant intactId="EBI-10944">
        <id>Q12176</id>
        <label>MAK21</label>
    </interactant>
    <organismsDiffer>false</organismsDiffer>
    <experiments>7</experiments>
</comment>
<comment type="interaction">
    <interactant intactId="EBI-12122">
        <id>P37838</id>
    </interactant>
    <interactant intactId="EBI-10394">
        <id>P38112</id>
        <label>MAK5</label>
    </interactant>
    <organismsDiffer>false</organismsDiffer>
    <experiments>5</experiments>
</comment>
<comment type="interaction">
    <interactant intactId="EBI-12122">
        <id>P37838</id>
    </interactant>
    <interactant intactId="EBI-29259">
        <id>P39744</id>
        <label>NOC2</label>
    </interactant>
    <organismsDiffer>false</organismsDiffer>
    <experiments>5</experiments>
</comment>
<comment type="interaction">
    <interactant intactId="EBI-12122">
        <id>P37838</id>
    </interactant>
    <interactant intactId="EBI-12105">
        <id>Q02892</id>
        <label>NOG1</label>
    </interactant>
    <organismsDiffer>false</organismsDiffer>
    <experiments>4</experiments>
</comment>
<comment type="interaction">
    <interactant intactId="EBI-12122">
        <id>P37838</id>
    </interactant>
    <interactant intactId="EBI-35895">
        <id>Q08208</id>
        <label>NOP12</label>
    </interactant>
    <organismsDiffer>false</organismsDiffer>
    <experiments>5</experiments>
</comment>
<comment type="interaction">
    <interactant intactId="EBI-12122">
        <id>P37838</id>
    </interactant>
    <interactant intactId="EBI-29032">
        <id>P53883</id>
        <label>NOP13</label>
    </interactant>
    <organismsDiffer>false</organismsDiffer>
    <experiments>3</experiments>
</comment>
<comment type="interaction">
    <interactant intactId="EBI-12122">
        <id>P37838</id>
    </interactant>
    <interactant intactId="EBI-22439">
        <id>P40007</id>
        <label>NOP16</label>
    </interactant>
    <organismsDiffer>false</organismsDiffer>
    <experiments>3</experiments>
</comment>
<comment type="interaction">
    <interactant intactId="EBI-12122">
        <id>P37838</id>
    </interactant>
    <interactant intactId="EBI-12122">
        <id>P37838</id>
        <label>NOP4</label>
    </interactant>
    <organismsDiffer>false</organismsDiffer>
    <experiments>3</experiments>
</comment>
<comment type="interaction">
    <interactant intactId="EBI-12122">
        <id>P37838</id>
    </interactant>
    <interactant intactId="EBI-22681">
        <id>P40078</id>
        <label>NSA2</label>
    </interactant>
    <organismsDiffer>false</organismsDiffer>
    <experiments>3</experiments>
</comment>
<comment type="interaction">
    <interactant intactId="EBI-12122">
        <id>P37838</id>
    </interactant>
    <interactant intactId="EBI-22449">
        <id>P40010</id>
        <label>NUG1</label>
    </interactant>
    <organismsDiffer>false</organismsDiffer>
    <experiments>4</experiments>
</comment>
<comment type="interaction">
    <interactant intactId="EBI-12122">
        <id>P37838</id>
    </interactant>
    <interactant intactId="EBI-505">
        <id>P53131</id>
        <label>PRP43</label>
    </interactant>
    <organismsDiffer>false</organismsDiffer>
    <experiments>3</experiments>
</comment>
<comment type="interaction">
    <interactant intactId="EBI-12122">
        <id>P37838</id>
    </interactant>
    <interactant intactId="EBI-30678">
        <id>Q12754</id>
        <label>RRP12</label>
    </interactant>
    <organismsDiffer>false</organismsDiffer>
    <experiments>4</experiments>
</comment>
<comment type="interaction">
    <interactant intactId="EBI-12122">
        <id>P37838</id>
    </interactant>
    <interactant intactId="EBI-26762">
        <id>P36080</id>
        <label>RRP14</label>
    </interactant>
    <organismsDiffer>false</organismsDiffer>
    <experiments>4</experiments>
</comment>
<comment type="interaction">
    <interactant intactId="EBI-12122">
        <id>P37838</id>
    </interactant>
    <interactant intactId="EBI-34720">
        <id>Q08687</id>
        <label>TMA16</label>
    </interactant>
    <organismsDiffer>false</organismsDiffer>
    <experiments>3</experiments>
</comment>
<comment type="subcellular location">
    <subcellularLocation>
        <location>Nucleus</location>
        <location>Nucleolus</location>
    </subcellularLocation>
</comment>
<comment type="miscellaneous">
    <text evidence="3">Present with 4990 molecules/cell in log phase SD medium.</text>
</comment>
<evidence type="ECO:0000255" key="1">
    <source>
        <dbReference type="PROSITE-ProRule" id="PRU00176"/>
    </source>
</evidence>
<evidence type="ECO:0000256" key="2">
    <source>
        <dbReference type="SAM" id="MobiDB-lite"/>
    </source>
</evidence>
<evidence type="ECO:0000269" key="3">
    <source>
    </source>
</evidence>
<evidence type="ECO:0007744" key="4">
    <source>
    </source>
</evidence>
<evidence type="ECO:0007744" key="5">
    <source>
    </source>
</evidence>
<evidence type="ECO:0007744" key="6">
    <source>
    </source>
</evidence>
<name>NOP4_YEAST</name>
<reference key="1">
    <citation type="journal article" date="1994" name="EMBO J.">
        <title>The yeast NOP4 gene product is an essential nucleolar protein required for pre-rRNA processing and accumulation of 60S ribosomal subunits.</title>
        <authorList>
            <person name="Sun C."/>
            <person name="Woolford J.L. Jr."/>
        </authorList>
    </citation>
    <scope>NUCLEOTIDE SEQUENCE [GENOMIC DNA]</scope>
</reference>
<reference key="2">
    <citation type="journal article" date="1994" name="EMBO J.">
        <title>Synthetic lethality with fibrillarin identifies NOP77p, a nucleolar protein required for pre-rRNA processing and modification.</title>
        <authorList>
            <person name="Berges T."/>
            <person name="Petfalski E."/>
            <person name="Tollervey D."/>
            <person name="Hurt E.C."/>
        </authorList>
    </citation>
    <scope>NUCLEOTIDE SEQUENCE [GENOMIC DNA]</scope>
</reference>
<reference key="3">
    <citation type="journal article" date="1997" name="Nature">
        <title>The nucleotide sequence of Saccharomyces cerevisiae chromosome XVI.</title>
        <authorList>
            <person name="Bussey H."/>
            <person name="Storms R.K."/>
            <person name="Ahmed A."/>
            <person name="Albermann K."/>
            <person name="Allen E."/>
            <person name="Ansorge W."/>
            <person name="Araujo R."/>
            <person name="Aparicio A."/>
            <person name="Barrell B.G."/>
            <person name="Badcock K."/>
            <person name="Benes V."/>
            <person name="Botstein D."/>
            <person name="Bowman S."/>
            <person name="Brueckner M."/>
            <person name="Carpenter J."/>
            <person name="Cherry J.M."/>
            <person name="Chung E."/>
            <person name="Churcher C.M."/>
            <person name="Coster F."/>
            <person name="Davis K."/>
            <person name="Davis R.W."/>
            <person name="Dietrich F.S."/>
            <person name="Delius H."/>
            <person name="DiPaolo T."/>
            <person name="Dubois E."/>
            <person name="Duesterhoeft A."/>
            <person name="Duncan M."/>
            <person name="Floeth M."/>
            <person name="Fortin N."/>
            <person name="Friesen J.D."/>
            <person name="Fritz C."/>
            <person name="Goffeau A."/>
            <person name="Hall J."/>
            <person name="Hebling U."/>
            <person name="Heumann K."/>
            <person name="Hilbert H."/>
            <person name="Hillier L.W."/>
            <person name="Hunicke-Smith S."/>
            <person name="Hyman R.W."/>
            <person name="Johnston M."/>
            <person name="Kalman S."/>
            <person name="Kleine K."/>
            <person name="Komp C."/>
            <person name="Kurdi O."/>
            <person name="Lashkari D."/>
            <person name="Lew H."/>
            <person name="Lin A."/>
            <person name="Lin D."/>
            <person name="Louis E.J."/>
            <person name="Marathe R."/>
            <person name="Messenguy F."/>
            <person name="Mewes H.-W."/>
            <person name="Mirtipati S."/>
            <person name="Moestl D."/>
            <person name="Mueller-Auer S."/>
            <person name="Namath A."/>
            <person name="Nentwich U."/>
            <person name="Oefner P."/>
            <person name="Pearson D."/>
            <person name="Petel F.X."/>
            <person name="Pohl T.M."/>
            <person name="Purnelle B."/>
            <person name="Rajandream M.A."/>
            <person name="Rechmann S."/>
            <person name="Rieger M."/>
            <person name="Riles L."/>
            <person name="Roberts D."/>
            <person name="Schaefer M."/>
            <person name="Scharfe M."/>
            <person name="Scherens B."/>
            <person name="Schramm S."/>
            <person name="Schroeder M."/>
            <person name="Sdicu A.-M."/>
            <person name="Tettelin H."/>
            <person name="Urrestarazu L.A."/>
            <person name="Ushinsky S."/>
            <person name="Vierendeels F."/>
            <person name="Vissers S."/>
            <person name="Voss H."/>
            <person name="Walsh S.V."/>
            <person name="Wambutt R."/>
            <person name="Wang Y."/>
            <person name="Wedler E."/>
            <person name="Wedler H."/>
            <person name="Winnett E."/>
            <person name="Zhong W.-W."/>
            <person name="Zollner A."/>
            <person name="Vo D.H."/>
            <person name="Hani J."/>
        </authorList>
    </citation>
    <scope>NUCLEOTIDE SEQUENCE [LARGE SCALE GENOMIC DNA]</scope>
    <source>
        <strain>ATCC 204508 / S288c</strain>
    </source>
</reference>
<reference key="4">
    <citation type="journal article" date="2014" name="G3 (Bethesda)">
        <title>The reference genome sequence of Saccharomyces cerevisiae: Then and now.</title>
        <authorList>
            <person name="Engel S.R."/>
            <person name="Dietrich F.S."/>
            <person name="Fisk D.G."/>
            <person name="Binkley G."/>
            <person name="Balakrishnan R."/>
            <person name="Costanzo M.C."/>
            <person name="Dwight S.S."/>
            <person name="Hitz B.C."/>
            <person name="Karra K."/>
            <person name="Nash R.S."/>
            <person name="Weng S."/>
            <person name="Wong E.D."/>
            <person name="Lloyd P."/>
            <person name="Skrzypek M.S."/>
            <person name="Miyasato S.R."/>
            <person name="Simison M."/>
            <person name="Cherry J.M."/>
        </authorList>
    </citation>
    <scope>GENOME REANNOTATION</scope>
    <source>
        <strain>ATCC 204508 / S288c</strain>
    </source>
</reference>
<reference key="5">
    <citation type="journal article" date="2003" name="Nature">
        <title>Global analysis of protein expression in yeast.</title>
        <authorList>
            <person name="Ghaemmaghami S."/>
            <person name="Huh W.-K."/>
            <person name="Bower K."/>
            <person name="Howson R.W."/>
            <person name="Belle A."/>
            <person name="Dephoure N."/>
            <person name="O'Shea E.K."/>
            <person name="Weissman J.S."/>
        </authorList>
    </citation>
    <scope>LEVEL OF PROTEIN EXPRESSION [LARGE SCALE ANALYSIS]</scope>
</reference>
<reference key="6">
    <citation type="journal article" date="2005" name="Mol. Cell. Proteomics">
        <title>Quantitative phosphoproteomics applied to the yeast pheromone signaling pathway.</title>
        <authorList>
            <person name="Gruhler A."/>
            <person name="Olsen J.V."/>
            <person name="Mohammed S."/>
            <person name="Mortensen P."/>
            <person name="Faergeman N.J."/>
            <person name="Mann M."/>
            <person name="Jensen O.N."/>
        </authorList>
    </citation>
    <scope>PHOSPHORYLATION [LARGE SCALE ANALYSIS] AT THR-379</scope>
    <scope>IDENTIFICATION BY MASS SPECTROMETRY [LARGE SCALE ANALYSIS]</scope>
    <source>
        <strain>YAL6B</strain>
    </source>
</reference>
<reference key="7">
    <citation type="journal article" date="2007" name="J. Proteome Res.">
        <title>Large-scale phosphorylation analysis of alpha-factor-arrested Saccharomyces cerevisiae.</title>
        <authorList>
            <person name="Li X."/>
            <person name="Gerber S.A."/>
            <person name="Rudner A.D."/>
            <person name="Beausoleil S.A."/>
            <person name="Haas W."/>
            <person name="Villen J."/>
            <person name="Elias J.E."/>
            <person name="Gygi S.P."/>
        </authorList>
    </citation>
    <scope>PHOSPHORYLATION [LARGE SCALE ANALYSIS] AT SER-247</scope>
    <scope>IDENTIFICATION BY MASS SPECTROMETRY [LARGE SCALE ANALYSIS]</scope>
    <source>
        <strain>ADR376</strain>
    </source>
</reference>
<reference key="8">
    <citation type="journal article" date="2008" name="Mol. Cell. Proteomics">
        <title>A multidimensional chromatography technology for in-depth phosphoproteome analysis.</title>
        <authorList>
            <person name="Albuquerque C.P."/>
            <person name="Smolka M.B."/>
            <person name="Payne S.H."/>
            <person name="Bafna V."/>
            <person name="Eng J."/>
            <person name="Zhou H."/>
        </authorList>
    </citation>
    <scope>IDENTIFICATION BY MASS SPECTROMETRY [LARGE SCALE ANALYSIS]</scope>
</reference>
<reference key="9">
    <citation type="journal article" date="2009" name="Science">
        <title>Global analysis of Cdk1 substrate phosphorylation sites provides insights into evolution.</title>
        <authorList>
            <person name="Holt L.J."/>
            <person name="Tuch B.B."/>
            <person name="Villen J."/>
            <person name="Johnson A.D."/>
            <person name="Gygi S.P."/>
            <person name="Morgan D.O."/>
        </authorList>
    </citation>
    <scope>PHOSPHORYLATION [LARGE SCALE ANALYSIS] AT SER-247</scope>
    <scope>IDENTIFICATION BY MASS SPECTROMETRY [LARGE SCALE ANALYSIS]</scope>
</reference>
<proteinExistence type="evidence at protein level"/>